<dbReference type="EC" id="7.-.-.-" evidence="1"/>
<dbReference type="EMBL" id="BX293980">
    <property type="protein sequence ID" value="CAE77337.1"/>
    <property type="molecule type" value="Genomic_DNA"/>
</dbReference>
<dbReference type="RefSeq" id="NP_975695.1">
    <property type="nucleotide sequence ID" value="NC_005364.2"/>
</dbReference>
<dbReference type="RefSeq" id="WP_011166888.1">
    <property type="nucleotide sequence ID" value="NC_005364.2"/>
</dbReference>
<dbReference type="SMR" id="Q6MSQ1"/>
<dbReference type="STRING" id="272632.MSC_0718"/>
<dbReference type="KEGG" id="mmy:MSC_0718"/>
<dbReference type="PATRIC" id="fig|272632.4.peg.772"/>
<dbReference type="eggNOG" id="COG1122">
    <property type="taxonomic scope" value="Bacteria"/>
</dbReference>
<dbReference type="HOGENOM" id="CLU_000604_18_0_14"/>
<dbReference type="Proteomes" id="UP000001016">
    <property type="component" value="Chromosome"/>
</dbReference>
<dbReference type="GO" id="GO:0043190">
    <property type="term" value="C:ATP-binding cassette (ABC) transporter complex"/>
    <property type="evidence" value="ECO:0007669"/>
    <property type="project" value="TreeGrafter"/>
</dbReference>
<dbReference type="GO" id="GO:0005524">
    <property type="term" value="F:ATP binding"/>
    <property type="evidence" value="ECO:0007669"/>
    <property type="project" value="UniProtKB-KW"/>
</dbReference>
<dbReference type="GO" id="GO:0016887">
    <property type="term" value="F:ATP hydrolysis activity"/>
    <property type="evidence" value="ECO:0007669"/>
    <property type="project" value="InterPro"/>
</dbReference>
<dbReference type="GO" id="GO:0042626">
    <property type="term" value="F:ATPase-coupled transmembrane transporter activity"/>
    <property type="evidence" value="ECO:0007669"/>
    <property type="project" value="TreeGrafter"/>
</dbReference>
<dbReference type="CDD" id="cd03225">
    <property type="entry name" value="ABC_cobalt_CbiO_domain1"/>
    <property type="match status" value="1"/>
</dbReference>
<dbReference type="FunFam" id="3.40.50.300:FF:000224">
    <property type="entry name" value="Energy-coupling factor transporter ATP-binding protein EcfA"/>
    <property type="match status" value="1"/>
</dbReference>
<dbReference type="Gene3D" id="3.40.50.300">
    <property type="entry name" value="P-loop containing nucleotide triphosphate hydrolases"/>
    <property type="match status" value="1"/>
</dbReference>
<dbReference type="InterPro" id="IPR003593">
    <property type="entry name" value="AAA+_ATPase"/>
</dbReference>
<dbReference type="InterPro" id="IPR003439">
    <property type="entry name" value="ABC_transporter-like_ATP-bd"/>
</dbReference>
<dbReference type="InterPro" id="IPR017871">
    <property type="entry name" value="ABC_transporter-like_CS"/>
</dbReference>
<dbReference type="InterPro" id="IPR015856">
    <property type="entry name" value="ABC_transpr_CbiO/EcfA_su"/>
</dbReference>
<dbReference type="InterPro" id="IPR050095">
    <property type="entry name" value="ECF_ABC_transporter_ATP-bd"/>
</dbReference>
<dbReference type="InterPro" id="IPR030947">
    <property type="entry name" value="EcfA_1"/>
</dbReference>
<dbReference type="InterPro" id="IPR027417">
    <property type="entry name" value="P-loop_NTPase"/>
</dbReference>
<dbReference type="NCBIfam" id="TIGR04520">
    <property type="entry name" value="ECF_ATPase_1"/>
    <property type="match status" value="1"/>
</dbReference>
<dbReference type="NCBIfam" id="NF010167">
    <property type="entry name" value="PRK13648.1"/>
    <property type="match status" value="1"/>
</dbReference>
<dbReference type="PANTHER" id="PTHR43553:SF24">
    <property type="entry name" value="ENERGY-COUPLING FACTOR TRANSPORTER ATP-BINDING PROTEIN ECFA1"/>
    <property type="match status" value="1"/>
</dbReference>
<dbReference type="PANTHER" id="PTHR43553">
    <property type="entry name" value="HEAVY METAL TRANSPORTER"/>
    <property type="match status" value="1"/>
</dbReference>
<dbReference type="Pfam" id="PF00005">
    <property type="entry name" value="ABC_tran"/>
    <property type="match status" value="1"/>
</dbReference>
<dbReference type="SMART" id="SM00382">
    <property type="entry name" value="AAA"/>
    <property type="match status" value="1"/>
</dbReference>
<dbReference type="SUPFAM" id="SSF52540">
    <property type="entry name" value="P-loop containing nucleoside triphosphate hydrolases"/>
    <property type="match status" value="1"/>
</dbReference>
<dbReference type="PROSITE" id="PS00211">
    <property type="entry name" value="ABC_TRANSPORTER_1"/>
    <property type="match status" value="1"/>
</dbReference>
<dbReference type="PROSITE" id="PS50893">
    <property type="entry name" value="ABC_TRANSPORTER_2"/>
    <property type="match status" value="1"/>
</dbReference>
<dbReference type="PROSITE" id="PS51246">
    <property type="entry name" value="CBIO"/>
    <property type="match status" value="1"/>
</dbReference>
<accession>Q6MSQ1</accession>
<name>ECFA1_MYCMS</name>
<reference key="1">
    <citation type="journal article" date="2004" name="Genome Res.">
        <title>The genome sequence of Mycoplasma mycoides subsp. mycoides SC type strain PG1T, the causative agent of contagious bovine pleuropneumonia (CBPP).</title>
        <authorList>
            <person name="Westberg J."/>
            <person name="Persson A."/>
            <person name="Holmberg A."/>
            <person name="Goesmann A."/>
            <person name="Lundeberg J."/>
            <person name="Johansson K.-E."/>
            <person name="Pettersson B."/>
            <person name="Uhlen M."/>
        </authorList>
    </citation>
    <scope>NUCLEOTIDE SEQUENCE [LARGE SCALE GENOMIC DNA]</scope>
    <source>
        <strain>CCUG 32753 / NCTC 10114 / PG1</strain>
    </source>
</reference>
<sequence>MDNSAIFEEFNSKKISQDDLEATITSLNNYFVKLNDLNNQYINLIRQDNIDKIEKQNIRQQQKQVKVEIKKISATTKLFKQNLKLAESLYKKIKLTNNQDDINKAKHEVEIAKSMLLQLKEVINGQGKSIKLKKLSDIAIEINHLSFKYGPEFPNAIDDVSFTINQGEYVTIIGHNGSGKSTISKILIGVLNAQHGEIKIFGNIVNDHNIEQARKFLGIVFQNPDNQFIGSTVEADIAFGLENKRIDPKKMPDIILDSAKKVGMEWALKKEPLNLSGGQKQRVAIASTLALDPDIMIFDEATSMLDPKGKREIKEIMVQLRETRTKTILSITHDMDEILNADKVIVLDHGKLVRVAKPLEIVEDKDFLRNIQLDVPFVGLVREELEKKGIKIASTQNIDELVEQICKK</sequence>
<protein>
    <recommendedName>
        <fullName evidence="1">Energy-coupling factor transporter ATP-binding protein EcfA1</fullName>
        <shortName evidence="1">ECF transporter A component EcfA1</shortName>
        <ecNumber evidence="1">7.-.-.-</ecNumber>
    </recommendedName>
</protein>
<evidence type="ECO:0000255" key="1">
    <source>
        <dbReference type="HAMAP-Rule" id="MF_01710"/>
    </source>
</evidence>
<proteinExistence type="inferred from homology"/>
<feature type="chain" id="PRO_0000092043" description="Energy-coupling factor transporter ATP-binding protein EcfA1">
    <location>
        <begin position="1"/>
        <end position="408"/>
    </location>
</feature>
<feature type="domain" description="ABC transporter" evidence="1">
    <location>
        <begin position="140"/>
        <end position="374"/>
    </location>
</feature>
<feature type="binding site" evidence="1">
    <location>
        <begin position="174"/>
        <end position="181"/>
    </location>
    <ligand>
        <name>ATP</name>
        <dbReference type="ChEBI" id="CHEBI:30616"/>
    </ligand>
</feature>
<comment type="function">
    <text evidence="1">ATP-binding (A) component of a common energy-coupling factor (ECF) ABC-transporter complex. Unlike classic ABC transporters this ECF transporter provides the energy necessary to transport a number of different substrates.</text>
</comment>
<comment type="subunit">
    <text evidence="1">Forms a stable energy-coupling factor (ECF) transporter complex composed of 2 membrane-embedded substrate-binding proteins (S component), 2 ATP-binding proteins (A component) and 2 transmembrane proteins (T component).</text>
</comment>
<comment type="subcellular location">
    <subcellularLocation>
        <location evidence="1">Cell membrane</location>
        <topology evidence="1">Peripheral membrane protein</topology>
    </subcellularLocation>
</comment>
<comment type="similarity">
    <text evidence="1">Belongs to the ABC transporter superfamily. Energy-coupling factor EcfA family.</text>
</comment>
<organism>
    <name type="scientific">Mycoplasma mycoides subsp. mycoides SC (strain CCUG 32753 / NCTC 10114 / PG1)</name>
    <dbReference type="NCBI Taxonomy" id="272632"/>
    <lineage>
        <taxon>Bacteria</taxon>
        <taxon>Bacillati</taxon>
        <taxon>Mycoplasmatota</taxon>
        <taxon>Mollicutes</taxon>
        <taxon>Mycoplasmataceae</taxon>
        <taxon>Mycoplasma</taxon>
    </lineage>
</organism>
<keyword id="KW-0067">ATP-binding</keyword>
<keyword id="KW-1003">Cell membrane</keyword>
<keyword id="KW-0472">Membrane</keyword>
<keyword id="KW-0547">Nucleotide-binding</keyword>
<keyword id="KW-1185">Reference proteome</keyword>
<keyword id="KW-1278">Translocase</keyword>
<keyword id="KW-0813">Transport</keyword>
<gene>
    <name evidence="1" type="primary">ecfA1</name>
    <name type="synonym">abc</name>
    <name type="synonym">cbiO1</name>
    <name type="ordered locus">MSC_0718</name>
</gene>